<evidence type="ECO:0000255" key="1">
    <source>
        <dbReference type="HAMAP-Rule" id="MF_01152"/>
    </source>
</evidence>
<comment type="function">
    <text evidence="1">Participates actively in the response to hyperosmotic and heat shock by preventing the aggregation of stress-denatured proteins and by disaggregating proteins, also in an autonomous, DnaK-independent fashion. Unfolded proteins bind initially to DnaJ; upon interaction with the DnaJ-bound protein, DnaK hydrolyzes its bound ATP, resulting in the formation of a stable complex. GrpE releases ADP from DnaK; ATP binding to DnaK triggers the release of the substrate protein, thus completing the reaction cycle. Several rounds of ATP-dependent interactions between DnaJ, DnaK and GrpE are required for fully efficient folding. Also involved, together with DnaK and GrpE, in the DNA replication of plasmids through activation of initiation proteins.</text>
</comment>
<comment type="cofactor">
    <cofactor evidence="1">
        <name>Zn(2+)</name>
        <dbReference type="ChEBI" id="CHEBI:29105"/>
    </cofactor>
    <text evidence="1">Binds 2 Zn(2+) ions per monomer.</text>
</comment>
<comment type="subunit">
    <text evidence="1">Homodimer.</text>
</comment>
<comment type="subcellular location">
    <subcellularLocation>
        <location evidence="1">Cytoplasm</location>
    </subcellularLocation>
</comment>
<comment type="domain">
    <text evidence="1">The J domain is necessary and sufficient to stimulate DnaK ATPase activity. Zinc center 1 plays an important role in the autonomous, DnaK-independent chaperone activity of DnaJ. Zinc center 2 is essential for interaction with DnaK and for DnaJ activity.</text>
</comment>
<comment type="similarity">
    <text evidence="1">Belongs to the DnaJ family.</text>
</comment>
<organism>
    <name type="scientific">Bacillus anthracis (strain CDC 684 / NRRL 3495)</name>
    <dbReference type="NCBI Taxonomy" id="568206"/>
    <lineage>
        <taxon>Bacteria</taxon>
        <taxon>Bacillati</taxon>
        <taxon>Bacillota</taxon>
        <taxon>Bacilli</taxon>
        <taxon>Bacillales</taxon>
        <taxon>Bacillaceae</taxon>
        <taxon>Bacillus</taxon>
        <taxon>Bacillus cereus group</taxon>
    </lineage>
</organism>
<accession>C3L5R6</accession>
<gene>
    <name evidence="1" type="primary">dnaJ</name>
    <name type="ordered locus">BAMEG_4575</name>
</gene>
<name>DNAJ_BACAC</name>
<reference key="1">
    <citation type="submission" date="2008-10" db="EMBL/GenBank/DDBJ databases">
        <title>Genome sequence of Bacillus anthracis str. CDC 684.</title>
        <authorList>
            <person name="Dodson R.J."/>
            <person name="Munk A.C."/>
            <person name="Brettin T."/>
            <person name="Bruce D."/>
            <person name="Detter C."/>
            <person name="Tapia R."/>
            <person name="Han C."/>
            <person name="Sutton G."/>
            <person name="Sims D."/>
        </authorList>
    </citation>
    <scope>NUCLEOTIDE SEQUENCE [LARGE SCALE GENOMIC DNA]</scope>
    <source>
        <strain>CDC 684 / NRRL 3495</strain>
    </source>
</reference>
<protein>
    <recommendedName>
        <fullName evidence="1">Chaperone protein DnaJ</fullName>
    </recommendedName>
</protein>
<keyword id="KW-0143">Chaperone</keyword>
<keyword id="KW-0963">Cytoplasm</keyword>
<keyword id="KW-0235">DNA replication</keyword>
<keyword id="KW-0479">Metal-binding</keyword>
<keyword id="KW-0677">Repeat</keyword>
<keyword id="KW-0346">Stress response</keyword>
<keyword id="KW-0862">Zinc</keyword>
<keyword id="KW-0863">Zinc-finger</keyword>
<dbReference type="EMBL" id="CP001215">
    <property type="protein sequence ID" value="ACP12200.1"/>
    <property type="molecule type" value="Genomic_DNA"/>
</dbReference>
<dbReference type="RefSeq" id="WP_000043938.1">
    <property type="nucleotide sequence ID" value="NC_012581.1"/>
</dbReference>
<dbReference type="SMR" id="C3L5R6"/>
<dbReference type="GeneID" id="45024190"/>
<dbReference type="KEGG" id="bah:BAMEG_4575"/>
<dbReference type="HOGENOM" id="CLU_017633_0_7_9"/>
<dbReference type="GO" id="GO:0005737">
    <property type="term" value="C:cytoplasm"/>
    <property type="evidence" value="ECO:0007669"/>
    <property type="project" value="UniProtKB-SubCell"/>
</dbReference>
<dbReference type="GO" id="GO:0005524">
    <property type="term" value="F:ATP binding"/>
    <property type="evidence" value="ECO:0007669"/>
    <property type="project" value="InterPro"/>
</dbReference>
<dbReference type="GO" id="GO:0031072">
    <property type="term" value="F:heat shock protein binding"/>
    <property type="evidence" value="ECO:0007669"/>
    <property type="project" value="InterPro"/>
</dbReference>
<dbReference type="GO" id="GO:0051082">
    <property type="term" value="F:unfolded protein binding"/>
    <property type="evidence" value="ECO:0007669"/>
    <property type="project" value="UniProtKB-UniRule"/>
</dbReference>
<dbReference type="GO" id="GO:0008270">
    <property type="term" value="F:zinc ion binding"/>
    <property type="evidence" value="ECO:0007669"/>
    <property type="project" value="UniProtKB-UniRule"/>
</dbReference>
<dbReference type="GO" id="GO:0051085">
    <property type="term" value="P:chaperone cofactor-dependent protein refolding"/>
    <property type="evidence" value="ECO:0007669"/>
    <property type="project" value="TreeGrafter"/>
</dbReference>
<dbReference type="GO" id="GO:0006260">
    <property type="term" value="P:DNA replication"/>
    <property type="evidence" value="ECO:0007669"/>
    <property type="project" value="UniProtKB-KW"/>
</dbReference>
<dbReference type="GO" id="GO:0042026">
    <property type="term" value="P:protein refolding"/>
    <property type="evidence" value="ECO:0007669"/>
    <property type="project" value="TreeGrafter"/>
</dbReference>
<dbReference type="GO" id="GO:0009408">
    <property type="term" value="P:response to heat"/>
    <property type="evidence" value="ECO:0007669"/>
    <property type="project" value="InterPro"/>
</dbReference>
<dbReference type="CDD" id="cd06257">
    <property type="entry name" value="DnaJ"/>
    <property type="match status" value="1"/>
</dbReference>
<dbReference type="CDD" id="cd10747">
    <property type="entry name" value="DnaJ_C"/>
    <property type="match status" value="1"/>
</dbReference>
<dbReference type="CDD" id="cd10719">
    <property type="entry name" value="DnaJ_zf"/>
    <property type="match status" value="1"/>
</dbReference>
<dbReference type="FunFam" id="1.10.287.110:FF:000031">
    <property type="entry name" value="Molecular chaperone DnaJ"/>
    <property type="match status" value="1"/>
</dbReference>
<dbReference type="FunFam" id="2.60.260.20:FF:000004">
    <property type="entry name" value="Molecular chaperone DnaJ"/>
    <property type="match status" value="1"/>
</dbReference>
<dbReference type="FunFam" id="2.60.260.20:FF:000009">
    <property type="entry name" value="Putative Mitochondrial DnaJ chaperone"/>
    <property type="match status" value="1"/>
</dbReference>
<dbReference type="Gene3D" id="6.20.20.10">
    <property type="match status" value="2"/>
</dbReference>
<dbReference type="Gene3D" id="1.10.287.110">
    <property type="entry name" value="DnaJ domain"/>
    <property type="match status" value="1"/>
</dbReference>
<dbReference type="Gene3D" id="2.60.260.20">
    <property type="entry name" value="Urease metallochaperone UreE, N-terminal domain"/>
    <property type="match status" value="2"/>
</dbReference>
<dbReference type="HAMAP" id="MF_01152">
    <property type="entry name" value="DnaJ"/>
    <property type="match status" value="1"/>
</dbReference>
<dbReference type="InterPro" id="IPR012724">
    <property type="entry name" value="DnaJ"/>
</dbReference>
<dbReference type="InterPro" id="IPR002939">
    <property type="entry name" value="DnaJ_C"/>
</dbReference>
<dbReference type="InterPro" id="IPR001623">
    <property type="entry name" value="DnaJ_domain"/>
</dbReference>
<dbReference type="InterPro" id="IPR018253">
    <property type="entry name" value="DnaJ_domain_CS"/>
</dbReference>
<dbReference type="InterPro" id="IPR008971">
    <property type="entry name" value="HSP40/DnaJ_pept-bd"/>
</dbReference>
<dbReference type="InterPro" id="IPR001305">
    <property type="entry name" value="HSP_DnaJ_Cys-rich_dom"/>
</dbReference>
<dbReference type="InterPro" id="IPR036410">
    <property type="entry name" value="HSP_DnaJ_Cys-rich_dom_sf"/>
</dbReference>
<dbReference type="InterPro" id="IPR036869">
    <property type="entry name" value="J_dom_sf"/>
</dbReference>
<dbReference type="NCBIfam" id="TIGR02349">
    <property type="entry name" value="DnaJ_bact"/>
    <property type="match status" value="1"/>
</dbReference>
<dbReference type="NCBIfam" id="NF008035">
    <property type="entry name" value="PRK10767.1"/>
    <property type="match status" value="1"/>
</dbReference>
<dbReference type="NCBIfam" id="NF010873">
    <property type="entry name" value="PRK14280.1"/>
    <property type="match status" value="1"/>
</dbReference>
<dbReference type="PANTHER" id="PTHR43096:SF48">
    <property type="entry name" value="CHAPERONE PROTEIN DNAJ"/>
    <property type="match status" value="1"/>
</dbReference>
<dbReference type="PANTHER" id="PTHR43096">
    <property type="entry name" value="DNAJ HOMOLOG 1, MITOCHONDRIAL-RELATED"/>
    <property type="match status" value="1"/>
</dbReference>
<dbReference type="Pfam" id="PF00226">
    <property type="entry name" value="DnaJ"/>
    <property type="match status" value="1"/>
</dbReference>
<dbReference type="Pfam" id="PF01556">
    <property type="entry name" value="DnaJ_C"/>
    <property type="match status" value="1"/>
</dbReference>
<dbReference type="Pfam" id="PF00684">
    <property type="entry name" value="DnaJ_CXXCXGXG"/>
    <property type="match status" value="1"/>
</dbReference>
<dbReference type="PRINTS" id="PR00625">
    <property type="entry name" value="JDOMAIN"/>
</dbReference>
<dbReference type="SMART" id="SM00271">
    <property type="entry name" value="DnaJ"/>
    <property type="match status" value="1"/>
</dbReference>
<dbReference type="SUPFAM" id="SSF46565">
    <property type="entry name" value="Chaperone J-domain"/>
    <property type="match status" value="1"/>
</dbReference>
<dbReference type="SUPFAM" id="SSF57938">
    <property type="entry name" value="DnaJ/Hsp40 cysteine-rich domain"/>
    <property type="match status" value="1"/>
</dbReference>
<dbReference type="SUPFAM" id="SSF49493">
    <property type="entry name" value="HSP40/DnaJ peptide-binding domain"/>
    <property type="match status" value="2"/>
</dbReference>
<dbReference type="PROSITE" id="PS00636">
    <property type="entry name" value="DNAJ_1"/>
    <property type="match status" value="1"/>
</dbReference>
<dbReference type="PROSITE" id="PS50076">
    <property type="entry name" value="DNAJ_2"/>
    <property type="match status" value="1"/>
</dbReference>
<dbReference type="PROSITE" id="PS51188">
    <property type="entry name" value="ZF_CR"/>
    <property type="match status" value="1"/>
</dbReference>
<sequence>MSKRDYYEVLGLSKGASKDEIKKAYRRLAKKYHPDVSKEENAIEKFKEVQEAYEVLSDDQKRAQYDQFGHAGANQGFGGFGGGGDFGGGFGFEDIFSSFFGGGGGRRRDPNAPRQGADLQYQVTLEFEEAIFGKELNVEIPVEDPCDTCKGSGAKPGTSKETCKHCSGSGQVSVEQNTPFGRIVNRQACSHCSGTGQMIKEKCTTCHGSGKVRKRKKINVKIPAGIDNGQQIRVSGKGEAGVNGGPAGDLYVVVHVRSHEFFEREGDHIICEMPLTFAQMALGAEVEVPTVHGKVKLKIPAGTQTGTEFRLKGKGAPNVRGYGQGDQYVVVRVVVPTKLTSHQKDLLREFAGQEEQDDSLFGKLKRAFKGE</sequence>
<proteinExistence type="inferred from homology"/>
<feature type="chain" id="PRO_1000164239" description="Chaperone protein DnaJ">
    <location>
        <begin position="1"/>
        <end position="371"/>
    </location>
</feature>
<feature type="domain" description="J" evidence="1">
    <location>
        <begin position="5"/>
        <end position="69"/>
    </location>
</feature>
<feature type="repeat" description="CXXCXGXG motif">
    <location>
        <begin position="146"/>
        <end position="153"/>
    </location>
</feature>
<feature type="repeat" description="CXXCXGXG motif">
    <location>
        <begin position="163"/>
        <end position="170"/>
    </location>
</feature>
<feature type="repeat" description="CXXCXGXG motif">
    <location>
        <begin position="189"/>
        <end position="196"/>
    </location>
</feature>
<feature type="repeat" description="CXXCXGXG motif">
    <location>
        <begin position="203"/>
        <end position="210"/>
    </location>
</feature>
<feature type="zinc finger region" description="CR-type" evidence="1">
    <location>
        <begin position="133"/>
        <end position="215"/>
    </location>
</feature>
<feature type="binding site" evidence="1">
    <location>
        <position position="146"/>
    </location>
    <ligand>
        <name>Zn(2+)</name>
        <dbReference type="ChEBI" id="CHEBI:29105"/>
        <label>1</label>
    </ligand>
</feature>
<feature type="binding site" evidence="1">
    <location>
        <position position="149"/>
    </location>
    <ligand>
        <name>Zn(2+)</name>
        <dbReference type="ChEBI" id="CHEBI:29105"/>
        <label>1</label>
    </ligand>
</feature>
<feature type="binding site" evidence="1">
    <location>
        <position position="163"/>
    </location>
    <ligand>
        <name>Zn(2+)</name>
        <dbReference type="ChEBI" id="CHEBI:29105"/>
        <label>2</label>
    </ligand>
</feature>
<feature type="binding site" evidence="1">
    <location>
        <position position="166"/>
    </location>
    <ligand>
        <name>Zn(2+)</name>
        <dbReference type="ChEBI" id="CHEBI:29105"/>
        <label>2</label>
    </ligand>
</feature>
<feature type="binding site" evidence="1">
    <location>
        <position position="189"/>
    </location>
    <ligand>
        <name>Zn(2+)</name>
        <dbReference type="ChEBI" id="CHEBI:29105"/>
        <label>2</label>
    </ligand>
</feature>
<feature type="binding site" evidence="1">
    <location>
        <position position="192"/>
    </location>
    <ligand>
        <name>Zn(2+)</name>
        <dbReference type="ChEBI" id="CHEBI:29105"/>
        <label>2</label>
    </ligand>
</feature>
<feature type="binding site" evidence="1">
    <location>
        <position position="203"/>
    </location>
    <ligand>
        <name>Zn(2+)</name>
        <dbReference type="ChEBI" id="CHEBI:29105"/>
        <label>1</label>
    </ligand>
</feature>
<feature type="binding site" evidence="1">
    <location>
        <position position="206"/>
    </location>
    <ligand>
        <name>Zn(2+)</name>
        <dbReference type="ChEBI" id="CHEBI:29105"/>
        <label>1</label>
    </ligand>
</feature>